<accession>A8MYA2</accession>
<gene>
    <name evidence="3" type="primary">CXorf49</name>
</gene>
<gene>
    <name evidence="4" type="primary">CXorf49B</name>
</gene>
<dbReference type="EMBL" id="BX276092">
    <property type="status" value="NOT_ANNOTATED_CDS"/>
    <property type="molecule type" value="Genomic_DNA"/>
</dbReference>
<dbReference type="EMBL" id="BI827666">
    <property type="status" value="NOT_ANNOTATED_CDS"/>
    <property type="molecule type" value="mRNA"/>
</dbReference>
<dbReference type="CCDS" id="CCDS75991.1"/>
<dbReference type="CCDS" id="CCDS75992.1"/>
<dbReference type="RefSeq" id="NP_001138611.1">
    <property type="nucleotide sequence ID" value="NM_001145139.1"/>
</dbReference>
<dbReference type="RefSeq" id="NP_001138612.1">
    <property type="nucleotide sequence ID" value="NM_001145140.2"/>
</dbReference>
<dbReference type="SMR" id="A8MYA2"/>
<dbReference type="STRING" id="9606.ENSP00000480355"/>
<dbReference type="GlyGen" id="A8MYA2">
    <property type="glycosylation" value="1 site, 1 O-linked glycan (1 site)"/>
</dbReference>
<dbReference type="iPTMnet" id="A8MYA2"/>
<dbReference type="PhosphoSitePlus" id="A8MYA2"/>
<dbReference type="BioMuta" id="CXorf49"/>
<dbReference type="MassIVE" id="A8MYA2"/>
<dbReference type="PaxDb" id="9606-ENSP00000480355"/>
<dbReference type="PeptideAtlas" id="A8MYA2"/>
<dbReference type="ProteomicsDB" id="2386"/>
<dbReference type="DNASU" id="100130361"/>
<dbReference type="Ensembl" id="ENST00000535490.3">
    <property type="protein sequence ID" value="ENSP00000480355.1"/>
    <property type="gene ID" value="ENSG00000215115.7"/>
</dbReference>
<dbReference type="Ensembl" id="ENST00000542739.3">
    <property type="protein sequence ID" value="ENSP00000482270.1"/>
    <property type="gene ID" value="ENSG00000215113.7"/>
</dbReference>
<dbReference type="GeneID" id="100130361"/>
<dbReference type="GeneID" id="100132994"/>
<dbReference type="KEGG" id="hsa:100130361"/>
<dbReference type="KEGG" id="hsa:100132994"/>
<dbReference type="MANE-Select" id="ENST00000535490.3">
    <property type="protein sequence ID" value="ENSP00000480355.1"/>
    <property type="RefSeq nucleotide sequence ID" value="NM_001145140.2"/>
    <property type="RefSeq protein sequence ID" value="NP_001138612.1"/>
</dbReference>
<dbReference type="MANE-Select" id="ENST00000542739.3">
    <property type="protein sequence ID" value="ENSP00000482270.1"/>
    <property type="RefSeq nucleotide sequence ID" value="NM_001145139.2"/>
    <property type="RefSeq protein sequence ID" value="NP_001138611.1"/>
</dbReference>
<dbReference type="UCSC" id="uc011mpy.3">
    <property type="organism name" value="human"/>
</dbReference>
<dbReference type="AGR" id="HGNC:30891"/>
<dbReference type="AGR" id="HGNC:34229"/>
<dbReference type="CTD" id="100130361"/>
<dbReference type="CTD" id="100132994"/>
<dbReference type="GeneCards" id="CXorf49"/>
<dbReference type="GeneCards" id="CXorf49B"/>
<dbReference type="HGNC" id="HGNC:30891">
    <property type="gene designation" value="CXorf49"/>
</dbReference>
<dbReference type="HGNC" id="HGNC:34229">
    <property type="gene designation" value="CXorf49B"/>
</dbReference>
<dbReference type="HPA" id="ENSG00000215113">
    <property type="expression patterns" value="Tissue enriched (testis)"/>
</dbReference>
<dbReference type="HPA" id="ENSG00000215115">
    <property type="expression patterns" value="Tissue enriched (testis)"/>
</dbReference>
<dbReference type="neXtProt" id="NX_A8MYA2"/>
<dbReference type="OpenTargets" id="ENSG00000215115"/>
<dbReference type="VEuPathDB" id="HostDB:ENSG00000215113"/>
<dbReference type="VEuPathDB" id="HostDB:ENSG00000215115"/>
<dbReference type="eggNOG" id="KOG3544">
    <property type="taxonomic scope" value="Eukaryota"/>
</dbReference>
<dbReference type="GeneTree" id="ENSGT00390000015252"/>
<dbReference type="HOGENOM" id="CLU_037026_1_0_1"/>
<dbReference type="InParanoid" id="A8MYA2"/>
<dbReference type="OMA" id="NRHEVPK"/>
<dbReference type="OrthoDB" id="9539629at2759"/>
<dbReference type="PAN-GO" id="A8MYA2">
    <property type="GO annotations" value="0 GO annotations based on evolutionary models"/>
</dbReference>
<dbReference type="PathwayCommons" id="A8MYA2"/>
<dbReference type="SignaLink" id="A8MYA2"/>
<dbReference type="BioGRID-ORCS" id="100130361">
    <property type="hits" value="8 hits in 190 CRISPR screens"/>
</dbReference>
<dbReference type="BioGRID-ORCS" id="100132994">
    <property type="hits" value="8 hits in 173 CRISPR screens"/>
</dbReference>
<dbReference type="Pharos" id="A8MYA2">
    <property type="development level" value="Tdark"/>
</dbReference>
<dbReference type="PRO" id="PR:A8MYA2"/>
<dbReference type="Proteomes" id="UP000005640">
    <property type="component" value="Chromosome X"/>
</dbReference>
<dbReference type="RNAct" id="A8MYA2">
    <property type="molecule type" value="protein"/>
</dbReference>
<dbReference type="Bgee" id="ENSG00000215113">
    <property type="expression patterns" value="Expressed in primordial germ cell in gonad and 37 other cell types or tissues"/>
</dbReference>
<dbReference type="InterPro" id="IPR027822">
    <property type="entry name" value="DUF4641"/>
</dbReference>
<dbReference type="PANTHER" id="PTHR31866:SF5">
    <property type="match status" value="1"/>
</dbReference>
<dbReference type="PANTHER" id="PTHR31866">
    <property type="entry name" value="GENE 4779-RELATED"/>
    <property type="match status" value="1"/>
</dbReference>
<dbReference type="Pfam" id="PF15483">
    <property type="entry name" value="DUF4641"/>
    <property type="match status" value="1"/>
</dbReference>
<reference key="1">
    <citation type="journal article" date="2005" name="Nature">
        <title>The DNA sequence of the human X chromosome.</title>
        <authorList>
            <person name="Ross M.T."/>
            <person name="Grafham D.V."/>
            <person name="Coffey A.J."/>
            <person name="Scherer S."/>
            <person name="McLay K."/>
            <person name="Muzny D."/>
            <person name="Platzer M."/>
            <person name="Howell G.R."/>
            <person name="Burrows C."/>
            <person name="Bird C.P."/>
            <person name="Frankish A."/>
            <person name="Lovell F.L."/>
            <person name="Howe K.L."/>
            <person name="Ashurst J.L."/>
            <person name="Fulton R.S."/>
            <person name="Sudbrak R."/>
            <person name="Wen G."/>
            <person name="Jones M.C."/>
            <person name="Hurles M.E."/>
            <person name="Andrews T.D."/>
            <person name="Scott C.E."/>
            <person name="Searle S."/>
            <person name="Ramser J."/>
            <person name="Whittaker A."/>
            <person name="Deadman R."/>
            <person name="Carter N.P."/>
            <person name="Hunt S.E."/>
            <person name="Chen R."/>
            <person name="Cree A."/>
            <person name="Gunaratne P."/>
            <person name="Havlak P."/>
            <person name="Hodgson A."/>
            <person name="Metzker M.L."/>
            <person name="Richards S."/>
            <person name="Scott G."/>
            <person name="Steffen D."/>
            <person name="Sodergren E."/>
            <person name="Wheeler D.A."/>
            <person name="Worley K.C."/>
            <person name="Ainscough R."/>
            <person name="Ambrose K.D."/>
            <person name="Ansari-Lari M.A."/>
            <person name="Aradhya S."/>
            <person name="Ashwell R.I."/>
            <person name="Babbage A.K."/>
            <person name="Bagguley C.L."/>
            <person name="Ballabio A."/>
            <person name="Banerjee R."/>
            <person name="Barker G.E."/>
            <person name="Barlow K.F."/>
            <person name="Barrett I.P."/>
            <person name="Bates K.N."/>
            <person name="Beare D.M."/>
            <person name="Beasley H."/>
            <person name="Beasley O."/>
            <person name="Beck A."/>
            <person name="Bethel G."/>
            <person name="Blechschmidt K."/>
            <person name="Brady N."/>
            <person name="Bray-Allen S."/>
            <person name="Bridgeman A.M."/>
            <person name="Brown A.J."/>
            <person name="Brown M.J."/>
            <person name="Bonnin D."/>
            <person name="Bruford E.A."/>
            <person name="Buhay C."/>
            <person name="Burch P."/>
            <person name="Burford D."/>
            <person name="Burgess J."/>
            <person name="Burrill W."/>
            <person name="Burton J."/>
            <person name="Bye J.M."/>
            <person name="Carder C."/>
            <person name="Carrel L."/>
            <person name="Chako J."/>
            <person name="Chapman J.C."/>
            <person name="Chavez D."/>
            <person name="Chen E."/>
            <person name="Chen G."/>
            <person name="Chen Y."/>
            <person name="Chen Z."/>
            <person name="Chinault C."/>
            <person name="Ciccodicola A."/>
            <person name="Clark S.Y."/>
            <person name="Clarke G."/>
            <person name="Clee C.M."/>
            <person name="Clegg S."/>
            <person name="Clerc-Blankenburg K."/>
            <person name="Clifford K."/>
            <person name="Cobley V."/>
            <person name="Cole C.G."/>
            <person name="Conquer J.S."/>
            <person name="Corby N."/>
            <person name="Connor R.E."/>
            <person name="David R."/>
            <person name="Davies J."/>
            <person name="Davis C."/>
            <person name="Davis J."/>
            <person name="Delgado O."/>
            <person name="Deshazo D."/>
            <person name="Dhami P."/>
            <person name="Ding Y."/>
            <person name="Dinh H."/>
            <person name="Dodsworth S."/>
            <person name="Draper H."/>
            <person name="Dugan-Rocha S."/>
            <person name="Dunham A."/>
            <person name="Dunn M."/>
            <person name="Durbin K.J."/>
            <person name="Dutta I."/>
            <person name="Eades T."/>
            <person name="Ellwood M."/>
            <person name="Emery-Cohen A."/>
            <person name="Errington H."/>
            <person name="Evans K.L."/>
            <person name="Faulkner L."/>
            <person name="Francis F."/>
            <person name="Frankland J."/>
            <person name="Fraser A.E."/>
            <person name="Galgoczy P."/>
            <person name="Gilbert J."/>
            <person name="Gill R."/>
            <person name="Gloeckner G."/>
            <person name="Gregory S.G."/>
            <person name="Gribble S."/>
            <person name="Griffiths C."/>
            <person name="Grocock R."/>
            <person name="Gu Y."/>
            <person name="Gwilliam R."/>
            <person name="Hamilton C."/>
            <person name="Hart E.A."/>
            <person name="Hawes A."/>
            <person name="Heath P.D."/>
            <person name="Heitmann K."/>
            <person name="Hennig S."/>
            <person name="Hernandez J."/>
            <person name="Hinzmann B."/>
            <person name="Ho S."/>
            <person name="Hoffs M."/>
            <person name="Howden P.J."/>
            <person name="Huckle E.J."/>
            <person name="Hume J."/>
            <person name="Hunt P.J."/>
            <person name="Hunt A.R."/>
            <person name="Isherwood J."/>
            <person name="Jacob L."/>
            <person name="Johnson D."/>
            <person name="Jones S."/>
            <person name="de Jong P.J."/>
            <person name="Joseph S.S."/>
            <person name="Keenan S."/>
            <person name="Kelly S."/>
            <person name="Kershaw J.K."/>
            <person name="Khan Z."/>
            <person name="Kioschis P."/>
            <person name="Klages S."/>
            <person name="Knights A.J."/>
            <person name="Kosiura A."/>
            <person name="Kovar-Smith C."/>
            <person name="Laird G.K."/>
            <person name="Langford C."/>
            <person name="Lawlor S."/>
            <person name="Leversha M."/>
            <person name="Lewis L."/>
            <person name="Liu W."/>
            <person name="Lloyd C."/>
            <person name="Lloyd D.M."/>
            <person name="Loulseged H."/>
            <person name="Loveland J.E."/>
            <person name="Lovell J.D."/>
            <person name="Lozado R."/>
            <person name="Lu J."/>
            <person name="Lyne R."/>
            <person name="Ma J."/>
            <person name="Maheshwari M."/>
            <person name="Matthews L.H."/>
            <person name="McDowall J."/>
            <person name="McLaren S."/>
            <person name="McMurray A."/>
            <person name="Meidl P."/>
            <person name="Meitinger T."/>
            <person name="Milne S."/>
            <person name="Miner G."/>
            <person name="Mistry S.L."/>
            <person name="Morgan M."/>
            <person name="Morris S."/>
            <person name="Mueller I."/>
            <person name="Mullikin J.C."/>
            <person name="Nguyen N."/>
            <person name="Nordsiek G."/>
            <person name="Nyakatura G."/>
            <person name="O'dell C.N."/>
            <person name="Okwuonu G."/>
            <person name="Palmer S."/>
            <person name="Pandian R."/>
            <person name="Parker D."/>
            <person name="Parrish J."/>
            <person name="Pasternak S."/>
            <person name="Patel D."/>
            <person name="Pearce A.V."/>
            <person name="Pearson D.M."/>
            <person name="Pelan S.E."/>
            <person name="Perez L."/>
            <person name="Porter K.M."/>
            <person name="Ramsey Y."/>
            <person name="Reichwald K."/>
            <person name="Rhodes S."/>
            <person name="Ridler K.A."/>
            <person name="Schlessinger D."/>
            <person name="Schueler M.G."/>
            <person name="Sehra H.K."/>
            <person name="Shaw-Smith C."/>
            <person name="Shen H."/>
            <person name="Sheridan E.M."/>
            <person name="Shownkeen R."/>
            <person name="Skuce C.D."/>
            <person name="Smith M.L."/>
            <person name="Sotheran E.C."/>
            <person name="Steingruber H.E."/>
            <person name="Steward C.A."/>
            <person name="Storey R."/>
            <person name="Swann R.M."/>
            <person name="Swarbreck D."/>
            <person name="Tabor P.E."/>
            <person name="Taudien S."/>
            <person name="Taylor T."/>
            <person name="Teague B."/>
            <person name="Thomas K."/>
            <person name="Thorpe A."/>
            <person name="Timms K."/>
            <person name="Tracey A."/>
            <person name="Trevanion S."/>
            <person name="Tromans A.C."/>
            <person name="d'Urso M."/>
            <person name="Verduzco D."/>
            <person name="Villasana D."/>
            <person name="Waldron L."/>
            <person name="Wall M."/>
            <person name="Wang Q."/>
            <person name="Warren J."/>
            <person name="Warry G.L."/>
            <person name="Wei X."/>
            <person name="West A."/>
            <person name="Whitehead S.L."/>
            <person name="Whiteley M.N."/>
            <person name="Wilkinson J.E."/>
            <person name="Willey D.L."/>
            <person name="Williams G."/>
            <person name="Williams L."/>
            <person name="Williamson A."/>
            <person name="Williamson H."/>
            <person name="Wilming L."/>
            <person name="Woodmansey R.L."/>
            <person name="Wray P.W."/>
            <person name="Yen J."/>
            <person name="Zhang J."/>
            <person name="Zhou J."/>
            <person name="Zoghbi H."/>
            <person name="Zorilla S."/>
            <person name="Buck D."/>
            <person name="Reinhardt R."/>
            <person name="Poustka A."/>
            <person name="Rosenthal A."/>
            <person name="Lehrach H."/>
            <person name="Meindl A."/>
            <person name="Minx P.J."/>
            <person name="Hillier L.W."/>
            <person name="Willard H.F."/>
            <person name="Wilson R.K."/>
            <person name="Waterston R.H."/>
            <person name="Rice C.M."/>
            <person name="Vaudin M."/>
            <person name="Coulson A."/>
            <person name="Nelson D.L."/>
            <person name="Weinstock G."/>
            <person name="Sulston J.E."/>
            <person name="Durbin R.M."/>
            <person name="Hubbard T."/>
            <person name="Gibbs R.A."/>
            <person name="Beck S."/>
            <person name="Rogers J."/>
            <person name="Bentley D.R."/>
        </authorList>
    </citation>
    <scope>NUCLEOTIDE SEQUENCE [LARGE SCALE GENOMIC DNA]</scope>
</reference>
<reference key="2">
    <citation type="journal article" date="2004" name="Genome Res.">
        <title>The status, quality, and expansion of the NIH full-length cDNA project: the Mammalian Gene Collection (MGC).</title>
        <authorList>
            <consortium name="The MGC Project Team"/>
        </authorList>
    </citation>
    <scope>NUCLEOTIDE SEQUENCE [LARGE SCALE MRNA] OF 1-188</scope>
</reference>
<keyword id="KW-1267">Proteomics identification</keyword>
<keyword id="KW-1185">Reference proteome</keyword>
<feature type="chain" id="PRO_0000343895" description="Uncharacterized protein CXorf49">
    <location>
        <begin position="1"/>
        <end position="514"/>
    </location>
</feature>
<feature type="region of interest" description="Disordered" evidence="1">
    <location>
        <begin position="1"/>
        <end position="68"/>
    </location>
</feature>
<feature type="region of interest" description="Disordered" evidence="1">
    <location>
        <begin position="109"/>
        <end position="244"/>
    </location>
</feature>
<feature type="region of interest" description="Disordered" evidence="1">
    <location>
        <begin position="272"/>
        <end position="484"/>
    </location>
</feature>
<feature type="compositionally biased region" description="Basic residues" evidence="1">
    <location>
        <begin position="368"/>
        <end position="384"/>
    </location>
</feature>
<feature type="compositionally biased region" description="Basic and acidic residues" evidence="1">
    <location>
        <begin position="385"/>
        <end position="405"/>
    </location>
</feature>
<evidence type="ECO:0000256" key="1">
    <source>
        <dbReference type="SAM" id="MobiDB-lite"/>
    </source>
</evidence>
<evidence type="ECO:0000305" key="2"/>
<evidence type="ECO:0000312" key="3">
    <source>
        <dbReference type="HGNC" id="HGNC:30891"/>
    </source>
</evidence>
<evidence type="ECO:0000312" key="4">
    <source>
        <dbReference type="HGNC" id="HGNC:34229"/>
    </source>
</evidence>
<proteinExistence type="evidence at protein level"/>
<protein>
    <recommendedName>
        <fullName evidence="2">Uncharacterized protein CXorf49</fullName>
    </recommendedName>
</protein>
<organism>
    <name type="scientific">Homo sapiens</name>
    <name type="common">Human</name>
    <dbReference type="NCBI Taxonomy" id="9606"/>
    <lineage>
        <taxon>Eukaryota</taxon>
        <taxon>Metazoa</taxon>
        <taxon>Chordata</taxon>
        <taxon>Craniata</taxon>
        <taxon>Vertebrata</taxon>
        <taxon>Euteleostomi</taxon>
        <taxon>Mammalia</taxon>
        <taxon>Eutheria</taxon>
        <taxon>Euarchontoglires</taxon>
        <taxon>Primates</taxon>
        <taxon>Haplorrhini</taxon>
        <taxon>Catarrhini</taxon>
        <taxon>Hominidae</taxon>
        <taxon>Homo</taxon>
    </lineage>
</organism>
<name>CX049_HUMAN</name>
<sequence length="514" mass="54417">MSSPDKVSVCGAGFDLEGGKKAGSRTASPGAPGAHSHGLDLGVPGSGDGKSESGFTDPEGFSFESESELIEQGRVVLWGREGRPGTPVDDQGDVVDYSFYLADEPAAIVPPPSVQGHPFPEGAAAEGSAENWADAEVGPSGRDVLGHSPGKWQQASAGRLHLCGPGPVRAWKNPERGSKSRWSLRVDPQQPSAKGPTRLPTHDSDSADESSDLPLMKVGICRNEGSQAKPGSPKKRADTSRQASFHCKESYLPVPGRFLTSAPRGLTPVAERPAVGELEDSPQKKMQSRAWGKVEVRPSCSGAAAAGALPQGLSRRKMAGGKKSLGGASQLALGRGFPACGERLSAAPPEPATFPPFSGVRPQGMSKKPQKPKHSSPGKKPAGRKTRESQAAAREDNDPNRDEVPRAQLPTHRPGLPRLSVRRGEFSSSDPNIRAPQLPGTSEPSAYSPGGLVPRRHAPSGNQQPPVHPPRPERQQQPPGAQGCPRCIWLQREIEDLTQQLAAMQFLTDKFQDL</sequence>